<feature type="chain" id="PRO_1000090540" description="Crossover junction endodeoxyribonuclease RuvC">
    <location>
        <begin position="1"/>
        <end position="161"/>
    </location>
</feature>
<feature type="active site" evidence="1">
    <location>
        <position position="7"/>
    </location>
</feature>
<feature type="active site" evidence="1">
    <location>
        <position position="67"/>
    </location>
</feature>
<feature type="active site" evidence="1">
    <location>
        <position position="140"/>
    </location>
</feature>
<feature type="binding site" evidence="1">
    <location>
        <position position="7"/>
    </location>
    <ligand>
        <name>Mg(2+)</name>
        <dbReference type="ChEBI" id="CHEBI:18420"/>
        <label>1</label>
    </ligand>
</feature>
<feature type="binding site" evidence="1">
    <location>
        <position position="67"/>
    </location>
    <ligand>
        <name>Mg(2+)</name>
        <dbReference type="ChEBI" id="CHEBI:18420"/>
        <label>2</label>
    </ligand>
</feature>
<feature type="binding site" evidence="1">
    <location>
        <position position="140"/>
    </location>
    <ligand>
        <name>Mg(2+)</name>
        <dbReference type="ChEBI" id="CHEBI:18420"/>
        <label>1</label>
    </ligand>
</feature>
<evidence type="ECO:0000255" key="1">
    <source>
        <dbReference type="HAMAP-Rule" id="MF_00034"/>
    </source>
</evidence>
<dbReference type="EC" id="3.1.21.10" evidence="1"/>
<dbReference type="EMBL" id="CP001034">
    <property type="protein sequence ID" value="ACB85370.1"/>
    <property type="molecule type" value="Genomic_DNA"/>
</dbReference>
<dbReference type="RefSeq" id="WP_012448237.1">
    <property type="nucleotide sequence ID" value="NC_010718.1"/>
</dbReference>
<dbReference type="SMR" id="B2A5L6"/>
<dbReference type="STRING" id="457570.Nther_1798"/>
<dbReference type="KEGG" id="nth:Nther_1798"/>
<dbReference type="eggNOG" id="COG0817">
    <property type="taxonomic scope" value="Bacteria"/>
</dbReference>
<dbReference type="HOGENOM" id="CLU_091257_3_1_9"/>
<dbReference type="InParanoid" id="B2A5L6"/>
<dbReference type="OrthoDB" id="9805499at2"/>
<dbReference type="Proteomes" id="UP000001683">
    <property type="component" value="Chromosome"/>
</dbReference>
<dbReference type="GO" id="GO:0005737">
    <property type="term" value="C:cytoplasm"/>
    <property type="evidence" value="ECO:0007669"/>
    <property type="project" value="UniProtKB-SubCell"/>
</dbReference>
<dbReference type="GO" id="GO:0048476">
    <property type="term" value="C:Holliday junction resolvase complex"/>
    <property type="evidence" value="ECO:0007669"/>
    <property type="project" value="UniProtKB-UniRule"/>
</dbReference>
<dbReference type="GO" id="GO:0008821">
    <property type="term" value="F:crossover junction DNA endonuclease activity"/>
    <property type="evidence" value="ECO:0007669"/>
    <property type="project" value="UniProtKB-UniRule"/>
</dbReference>
<dbReference type="GO" id="GO:0003677">
    <property type="term" value="F:DNA binding"/>
    <property type="evidence" value="ECO:0007669"/>
    <property type="project" value="UniProtKB-KW"/>
</dbReference>
<dbReference type="GO" id="GO:0000287">
    <property type="term" value="F:magnesium ion binding"/>
    <property type="evidence" value="ECO:0007669"/>
    <property type="project" value="UniProtKB-UniRule"/>
</dbReference>
<dbReference type="GO" id="GO:0006310">
    <property type="term" value="P:DNA recombination"/>
    <property type="evidence" value="ECO:0007669"/>
    <property type="project" value="UniProtKB-UniRule"/>
</dbReference>
<dbReference type="GO" id="GO:0006281">
    <property type="term" value="P:DNA repair"/>
    <property type="evidence" value="ECO:0007669"/>
    <property type="project" value="UniProtKB-UniRule"/>
</dbReference>
<dbReference type="CDD" id="cd16962">
    <property type="entry name" value="RuvC"/>
    <property type="match status" value="1"/>
</dbReference>
<dbReference type="FunFam" id="3.30.420.10:FF:000002">
    <property type="entry name" value="Crossover junction endodeoxyribonuclease RuvC"/>
    <property type="match status" value="1"/>
</dbReference>
<dbReference type="Gene3D" id="3.30.420.10">
    <property type="entry name" value="Ribonuclease H-like superfamily/Ribonuclease H"/>
    <property type="match status" value="1"/>
</dbReference>
<dbReference type="HAMAP" id="MF_00034">
    <property type="entry name" value="RuvC"/>
    <property type="match status" value="1"/>
</dbReference>
<dbReference type="InterPro" id="IPR012337">
    <property type="entry name" value="RNaseH-like_sf"/>
</dbReference>
<dbReference type="InterPro" id="IPR036397">
    <property type="entry name" value="RNaseH_sf"/>
</dbReference>
<dbReference type="InterPro" id="IPR020563">
    <property type="entry name" value="X-over_junc_endoDNase_Mg_BS"/>
</dbReference>
<dbReference type="InterPro" id="IPR002176">
    <property type="entry name" value="X-over_junc_endoDNase_RuvC"/>
</dbReference>
<dbReference type="NCBIfam" id="NF000711">
    <property type="entry name" value="PRK00039.2-1"/>
    <property type="match status" value="1"/>
</dbReference>
<dbReference type="NCBIfam" id="TIGR00228">
    <property type="entry name" value="ruvC"/>
    <property type="match status" value="1"/>
</dbReference>
<dbReference type="PANTHER" id="PTHR30194">
    <property type="entry name" value="CROSSOVER JUNCTION ENDODEOXYRIBONUCLEASE RUVC"/>
    <property type="match status" value="1"/>
</dbReference>
<dbReference type="PANTHER" id="PTHR30194:SF3">
    <property type="entry name" value="CROSSOVER JUNCTION ENDODEOXYRIBONUCLEASE RUVC"/>
    <property type="match status" value="1"/>
</dbReference>
<dbReference type="Pfam" id="PF02075">
    <property type="entry name" value="RuvC"/>
    <property type="match status" value="1"/>
</dbReference>
<dbReference type="PRINTS" id="PR00696">
    <property type="entry name" value="RSOLVASERUVC"/>
</dbReference>
<dbReference type="SUPFAM" id="SSF53098">
    <property type="entry name" value="Ribonuclease H-like"/>
    <property type="match status" value="1"/>
</dbReference>
<dbReference type="PROSITE" id="PS01321">
    <property type="entry name" value="RUVC"/>
    <property type="match status" value="1"/>
</dbReference>
<proteinExistence type="inferred from homology"/>
<accession>B2A5L6</accession>
<gene>
    <name evidence="1" type="primary">ruvC</name>
    <name type="ordered locus">Nther_1798</name>
</gene>
<organism>
    <name type="scientific">Natranaerobius thermophilus (strain ATCC BAA-1301 / DSM 18059 / JW/NM-WN-LF)</name>
    <dbReference type="NCBI Taxonomy" id="457570"/>
    <lineage>
        <taxon>Bacteria</taxon>
        <taxon>Bacillati</taxon>
        <taxon>Bacillota</taxon>
        <taxon>Clostridia</taxon>
        <taxon>Natranaerobiales</taxon>
        <taxon>Natranaerobiaceae</taxon>
        <taxon>Natranaerobius</taxon>
    </lineage>
</organism>
<comment type="function">
    <text evidence="1">The RuvA-RuvB-RuvC complex processes Holliday junction (HJ) DNA during genetic recombination and DNA repair. Endonuclease that resolves HJ intermediates. Cleaves cruciform DNA by making single-stranded nicks across the HJ at symmetrical positions within the homologous arms, yielding a 5'-phosphate and a 3'-hydroxyl group; requires a central core of homology in the junction. The consensus cleavage sequence is 5'-(A/T)TT(C/G)-3'. Cleavage occurs on the 3'-side of the TT dinucleotide at the point of strand exchange. HJ branch migration catalyzed by RuvA-RuvB allows RuvC to scan DNA until it finds its consensus sequence, where it cleaves and resolves the cruciform DNA.</text>
</comment>
<comment type="catalytic activity">
    <reaction evidence="1">
        <text>Endonucleolytic cleavage at a junction such as a reciprocal single-stranded crossover between two homologous DNA duplexes (Holliday junction).</text>
        <dbReference type="EC" id="3.1.21.10"/>
    </reaction>
</comment>
<comment type="cofactor">
    <cofactor evidence="1">
        <name>Mg(2+)</name>
        <dbReference type="ChEBI" id="CHEBI:18420"/>
    </cofactor>
    <text evidence="1">Binds 2 Mg(2+) ion per subunit.</text>
</comment>
<comment type="subunit">
    <text evidence="1">Homodimer which binds Holliday junction (HJ) DNA. The HJ becomes 2-fold symmetrical on binding to RuvC with unstacked arms; it has a different conformation from HJ DNA in complex with RuvA. In the full resolvosome a probable DNA-RuvA(4)-RuvB(12)-RuvC(2) complex forms which resolves the HJ.</text>
</comment>
<comment type="subcellular location">
    <subcellularLocation>
        <location evidence="1">Cytoplasm</location>
    </subcellularLocation>
</comment>
<comment type="similarity">
    <text evidence="1">Belongs to the RuvC family.</text>
</comment>
<protein>
    <recommendedName>
        <fullName evidence="1">Crossover junction endodeoxyribonuclease RuvC</fullName>
        <ecNumber evidence="1">3.1.21.10</ecNumber>
    </recommendedName>
    <alternativeName>
        <fullName evidence="1">Holliday junction nuclease RuvC</fullName>
    </alternativeName>
    <alternativeName>
        <fullName evidence="1">Holliday junction resolvase RuvC</fullName>
    </alternativeName>
</protein>
<reference key="1">
    <citation type="submission" date="2008-04" db="EMBL/GenBank/DDBJ databases">
        <title>Complete sequence of chromosome of Natranaerobius thermophilus JW/NM-WN-LF.</title>
        <authorList>
            <consortium name="US DOE Joint Genome Institute"/>
            <person name="Copeland A."/>
            <person name="Lucas S."/>
            <person name="Lapidus A."/>
            <person name="Glavina del Rio T."/>
            <person name="Dalin E."/>
            <person name="Tice H."/>
            <person name="Bruce D."/>
            <person name="Goodwin L."/>
            <person name="Pitluck S."/>
            <person name="Chertkov O."/>
            <person name="Brettin T."/>
            <person name="Detter J.C."/>
            <person name="Han C."/>
            <person name="Kuske C.R."/>
            <person name="Schmutz J."/>
            <person name="Larimer F."/>
            <person name="Land M."/>
            <person name="Hauser L."/>
            <person name="Kyrpides N."/>
            <person name="Lykidis A."/>
            <person name="Mesbah N.M."/>
            <person name="Wiegel J."/>
        </authorList>
    </citation>
    <scope>NUCLEOTIDE SEQUENCE [LARGE SCALE GENOMIC DNA]</scope>
    <source>
        <strain>ATCC BAA-1301 / DSM 18059 / JW/NM-WN-LF</strain>
    </source>
</reference>
<name>RUVC_NATTJ</name>
<keyword id="KW-0963">Cytoplasm</keyword>
<keyword id="KW-0227">DNA damage</keyword>
<keyword id="KW-0233">DNA recombination</keyword>
<keyword id="KW-0234">DNA repair</keyword>
<keyword id="KW-0238">DNA-binding</keyword>
<keyword id="KW-0255">Endonuclease</keyword>
<keyword id="KW-0378">Hydrolase</keyword>
<keyword id="KW-0460">Magnesium</keyword>
<keyword id="KW-0479">Metal-binding</keyword>
<keyword id="KW-0540">Nuclease</keyword>
<keyword id="KW-1185">Reference proteome</keyword>
<sequence>MIIMGLDPGIAACGYGIIHAKGTKLECLACGVLRTYSDESATKRLESIYQGVSNLISEFSPNTVAVESLFFAKNSKTAMKVGQAKGVLMLAAAHNNLEIFEYTPLQVKQGVCGYGSASKEQVQKMVKQILSLDKIPKPDDAADALAVSLCHSQAYRLRTRL</sequence>